<protein>
    <recommendedName>
        <fullName evidence="1">Eukaryotic translation initiation factor 3 subunit I</fullName>
        <shortName evidence="1">eIF3i</shortName>
    </recommendedName>
    <alternativeName>
        <fullName evidence="1">Eukaryotic translation initiation factor 3 39 kDa subunit homolog</fullName>
        <shortName evidence="1">eIF-3 39 kDa subunit homolog</shortName>
    </alternativeName>
</protein>
<organism>
    <name type="scientific">Aspergillus fumigatus (strain CBS 144.89 / FGSC A1163 / CEA10)</name>
    <name type="common">Neosartorya fumigata</name>
    <dbReference type="NCBI Taxonomy" id="451804"/>
    <lineage>
        <taxon>Eukaryota</taxon>
        <taxon>Fungi</taxon>
        <taxon>Dikarya</taxon>
        <taxon>Ascomycota</taxon>
        <taxon>Pezizomycotina</taxon>
        <taxon>Eurotiomycetes</taxon>
        <taxon>Eurotiomycetidae</taxon>
        <taxon>Eurotiales</taxon>
        <taxon>Aspergillaceae</taxon>
        <taxon>Aspergillus</taxon>
        <taxon>Aspergillus subgen. Fumigati</taxon>
    </lineage>
</organism>
<reference key="1">
    <citation type="journal article" date="2008" name="PLoS Genet.">
        <title>Genomic islands in the pathogenic filamentous fungus Aspergillus fumigatus.</title>
        <authorList>
            <person name="Fedorova N.D."/>
            <person name="Khaldi N."/>
            <person name="Joardar V.S."/>
            <person name="Maiti R."/>
            <person name="Amedeo P."/>
            <person name="Anderson M.J."/>
            <person name="Crabtree J."/>
            <person name="Silva J.C."/>
            <person name="Badger J.H."/>
            <person name="Albarraq A."/>
            <person name="Angiuoli S."/>
            <person name="Bussey H."/>
            <person name="Bowyer P."/>
            <person name="Cotty P.J."/>
            <person name="Dyer P.S."/>
            <person name="Egan A."/>
            <person name="Galens K."/>
            <person name="Fraser-Liggett C.M."/>
            <person name="Haas B.J."/>
            <person name="Inman J.M."/>
            <person name="Kent R."/>
            <person name="Lemieux S."/>
            <person name="Malavazi I."/>
            <person name="Orvis J."/>
            <person name="Roemer T."/>
            <person name="Ronning C.M."/>
            <person name="Sundaram J.P."/>
            <person name="Sutton G."/>
            <person name="Turner G."/>
            <person name="Venter J.C."/>
            <person name="White O.R."/>
            <person name="Whitty B.R."/>
            <person name="Youngman P."/>
            <person name="Wolfe K.H."/>
            <person name="Goldman G.H."/>
            <person name="Wortman J.R."/>
            <person name="Jiang B."/>
            <person name="Denning D.W."/>
            <person name="Nierman W.C."/>
        </authorList>
    </citation>
    <scope>NUCLEOTIDE SEQUENCE [LARGE SCALE GENOMIC DNA]</scope>
    <source>
        <strain>CBS 144.89 / FGSC A1163 / CEA10</strain>
    </source>
</reference>
<dbReference type="EMBL" id="DS499596">
    <property type="protein sequence ID" value="EDP52874.1"/>
    <property type="molecule type" value="Genomic_DNA"/>
</dbReference>
<dbReference type="SMR" id="B0XYC8"/>
<dbReference type="EnsemblFungi" id="EDP52874">
    <property type="protein sequence ID" value="EDP52874"/>
    <property type="gene ID" value="AFUB_040450"/>
</dbReference>
<dbReference type="VEuPathDB" id="FungiDB:AFUB_040450"/>
<dbReference type="HOGENOM" id="CLU_043845_0_1_1"/>
<dbReference type="OrthoDB" id="12186at5052"/>
<dbReference type="PhylomeDB" id="B0XYC8"/>
<dbReference type="Proteomes" id="UP000001699">
    <property type="component" value="Unassembled WGS sequence"/>
</dbReference>
<dbReference type="GO" id="GO:0016282">
    <property type="term" value="C:eukaryotic 43S preinitiation complex"/>
    <property type="evidence" value="ECO:0007669"/>
    <property type="project" value="UniProtKB-UniRule"/>
</dbReference>
<dbReference type="GO" id="GO:0033290">
    <property type="term" value="C:eukaryotic 48S preinitiation complex"/>
    <property type="evidence" value="ECO:0007669"/>
    <property type="project" value="UniProtKB-UniRule"/>
</dbReference>
<dbReference type="GO" id="GO:0071540">
    <property type="term" value="C:eukaryotic translation initiation factor 3 complex, eIF3e"/>
    <property type="evidence" value="ECO:0007669"/>
    <property type="project" value="EnsemblFungi"/>
</dbReference>
<dbReference type="GO" id="GO:0071541">
    <property type="term" value="C:eukaryotic translation initiation factor 3 complex, eIF3m"/>
    <property type="evidence" value="ECO:0007669"/>
    <property type="project" value="EnsemblFungi"/>
</dbReference>
<dbReference type="GO" id="GO:0034399">
    <property type="term" value="C:nuclear periphery"/>
    <property type="evidence" value="ECO:0007669"/>
    <property type="project" value="EnsemblFungi"/>
</dbReference>
<dbReference type="GO" id="GO:0003723">
    <property type="term" value="F:RNA binding"/>
    <property type="evidence" value="ECO:0007669"/>
    <property type="project" value="TreeGrafter"/>
</dbReference>
<dbReference type="GO" id="GO:0003743">
    <property type="term" value="F:translation initiation factor activity"/>
    <property type="evidence" value="ECO:0007669"/>
    <property type="project" value="UniProtKB-UniRule"/>
</dbReference>
<dbReference type="GO" id="GO:0001732">
    <property type="term" value="P:formation of cytoplasmic translation initiation complex"/>
    <property type="evidence" value="ECO:0007669"/>
    <property type="project" value="UniProtKB-UniRule"/>
</dbReference>
<dbReference type="FunFam" id="2.130.10.10:FF:000127">
    <property type="entry name" value="Eukaryotic translation initiation factor 3 subunit I"/>
    <property type="match status" value="1"/>
</dbReference>
<dbReference type="Gene3D" id="2.130.10.10">
    <property type="entry name" value="YVTN repeat-like/Quinoprotein amine dehydrogenase"/>
    <property type="match status" value="1"/>
</dbReference>
<dbReference type="HAMAP" id="MF_03008">
    <property type="entry name" value="eIF3i"/>
    <property type="match status" value="1"/>
</dbReference>
<dbReference type="InterPro" id="IPR027525">
    <property type="entry name" value="eIF3i"/>
</dbReference>
<dbReference type="InterPro" id="IPR015943">
    <property type="entry name" value="WD40/YVTN_repeat-like_dom_sf"/>
</dbReference>
<dbReference type="InterPro" id="IPR019775">
    <property type="entry name" value="WD40_repeat_CS"/>
</dbReference>
<dbReference type="InterPro" id="IPR036322">
    <property type="entry name" value="WD40_repeat_dom_sf"/>
</dbReference>
<dbReference type="InterPro" id="IPR001680">
    <property type="entry name" value="WD40_rpt"/>
</dbReference>
<dbReference type="PANTHER" id="PTHR19877">
    <property type="entry name" value="EUKARYOTIC TRANSLATION INITIATION FACTOR 3 SUBUNIT I"/>
    <property type="match status" value="1"/>
</dbReference>
<dbReference type="PANTHER" id="PTHR19877:SF1">
    <property type="entry name" value="EUKARYOTIC TRANSLATION INITIATION FACTOR 3 SUBUNIT I"/>
    <property type="match status" value="1"/>
</dbReference>
<dbReference type="Pfam" id="PF24805">
    <property type="entry name" value="EIF3I"/>
    <property type="match status" value="1"/>
</dbReference>
<dbReference type="SMART" id="SM00320">
    <property type="entry name" value="WD40"/>
    <property type="match status" value="6"/>
</dbReference>
<dbReference type="SUPFAM" id="SSF50978">
    <property type="entry name" value="WD40 repeat-like"/>
    <property type="match status" value="1"/>
</dbReference>
<dbReference type="PROSITE" id="PS00678">
    <property type="entry name" value="WD_REPEATS_1"/>
    <property type="match status" value="1"/>
</dbReference>
<dbReference type="PROSITE" id="PS50082">
    <property type="entry name" value="WD_REPEATS_2"/>
    <property type="match status" value="3"/>
</dbReference>
<dbReference type="PROSITE" id="PS50294">
    <property type="entry name" value="WD_REPEATS_REGION"/>
    <property type="match status" value="2"/>
</dbReference>
<accession>B0XYC8</accession>
<name>EIF3I_ASPFC</name>
<sequence>MRPILLSGHERSLNQIKFNRDGDLLFSVAKDKIVCAWWSANGERLGTYSGHQGAIWTVDVSPNTVLLATGSADNTVRLWNVKTGECVKVWDFPTAVKRVAFNPDGSRLLAVTEKRMGFLGTIAVLDINYGDSQGGGLENQADEPSLRITCTESKATVAGWSYLGKYIIAGHEDGSVSQYDGKTGEQLENVQAHEFDHQINDIQFSQDRTYFITASKDKSAKLISSRNLAILKTYVADTPLNSATITPKKDYVILGGGQAAMDVTTTSARQGKFEARFYHKVFEDEIGRVRGHFGPLNTVDVHPNGTAYASGGEDGYVRVHHFDKPYFDFMYEVEREQLRK</sequence>
<evidence type="ECO:0000255" key="1">
    <source>
        <dbReference type="HAMAP-Rule" id="MF_03008"/>
    </source>
</evidence>
<proteinExistence type="inferred from homology"/>
<feature type="chain" id="PRO_0000365356" description="Eukaryotic translation initiation factor 3 subunit I">
    <location>
        <begin position="1"/>
        <end position="340"/>
    </location>
</feature>
<feature type="repeat" description="WD 1">
    <location>
        <begin position="8"/>
        <end position="47"/>
    </location>
</feature>
<feature type="repeat" description="WD 2">
    <location>
        <begin position="50"/>
        <end position="91"/>
    </location>
</feature>
<feature type="repeat" description="WD 3">
    <location>
        <begin position="150"/>
        <end position="189"/>
    </location>
</feature>
<feature type="repeat" description="WD 4">
    <location>
        <begin position="194"/>
        <end position="233"/>
    </location>
</feature>
<feature type="repeat" description="WD 5">
    <location>
        <begin position="291"/>
        <end position="330"/>
    </location>
</feature>
<comment type="function">
    <text evidence="1">Component of the eukaryotic translation initiation factor 3 (eIF-3) complex, which is involved in protein synthesis of a specialized repertoire of mRNAs and, together with other initiation factors, stimulates binding of mRNA and methionyl-tRNAi to the 40S ribosome. The eIF-3 complex specifically targets and initiates translation of a subset of mRNAs involved in cell proliferation.</text>
</comment>
<comment type="subunit">
    <text evidence="1">Component of the eukaryotic translation initiation factor 3 (eIF-3) complex.</text>
</comment>
<comment type="subcellular location">
    <subcellularLocation>
        <location evidence="1">Cytoplasm</location>
    </subcellularLocation>
</comment>
<comment type="similarity">
    <text evidence="1">Belongs to the eIF-3 subunit I family.</text>
</comment>
<keyword id="KW-0963">Cytoplasm</keyword>
<keyword id="KW-0396">Initiation factor</keyword>
<keyword id="KW-0648">Protein biosynthesis</keyword>
<keyword id="KW-0677">Repeat</keyword>
<keyword id="KW-0853">WD repeat</keyword>
<gene>
    <name type="primary">tif34</name>
    <name type="ORF">AFUB_040450</name>
</gene>